<comment type="function">
    <text evidence="1">Transaldolase is important for the balance of metabolites in the pentose-phosphate pathway.</text>
</comment>
<comment type="catalytic activity">
    <reaction>
        <text>D-sedoheptulose 7-phosphate + D-glyceraldehyde 3-phosphate = D-erythrose 4-phosphate + beta-D-fructose 6-phosphate</text>
        <dbReference type="Rhea" id="RHEA:17053"/>
        <dbReference type="ChEBI" id="CHEBI:16897"/>
        <dbReference type="ChEBI" id="CHEBI:57483"/>
        <dbReference type="ChEBI" id="CHEBI:57634"/>
        <dbReference type="ChEBI" id="CHEBI:59776"/>
        <dbReference type="EC" id="2.2.1.2"/>
    </reaction>
</comment>
<comment type="pathway">
    <text>Carbohydrate degradation; pentose phosphate pathway; D-glyceraldehyde 3-phosphate and beta-D-fructose 6-phosphate from D-ribose 5-phosphate and D-xylulose 5-phosphate (non-oxidative stage): step 2/3.</text>
</comment>
<comment type="subcellular location">
    <subcellularLocation>
        <location evidence="1">Cytoplasm</location>
    </subcellularLocation>
</comment>
<comment type="similarity">
    <text evidence="3">Belongs to the transaldolase family. Type 2 subfamily.</text>
</comment>
<organism>
    <name type="scientific">Mycolicibacterium smegmatis (strain ATCC 700084 / mc(2)155)</name>
    <name type="common">Mycobacterium smegmatis</name>
    <dbReference type="NCBI Taxonomy" id="246196"/>
    <lineage>
        <taxon>Bacteria</taxon>
        <taxon>Bacillati</taxon>
        <taxon>Actinomycetota</taxon>
        <taxon>Actinomycetes</taxon>
        <taxon>Mycobacteriales</taxon>
        <taxon>Mycobacteriaceae</taxon>
        <taxon>Mycolicibacterium</taxon>
    </lineage>
</organism>
<proteinExistence type="evidence at protein level"/>
<protein>
    <recommendedName>
        <fullName>Transaldolase</fullName>
        <ecNumber>2.2.1.2</ecNumber>
    </recommendedName>
</protein>
<evidence type="ECO:0000250" key="1"/>
<evidence type="ECO:0000269" key="2">
    <source>
    </source>
</evidence>
<evidence type="ECO:0000305" key="3"/>
<gene>
    <name type="primary">tal</name>
    <name type="ordered locus">MSMEG_3102</name>
    <name type="ordered locus">MSMEI_3024</name>
</gene>
<name>TAL_MYCS2</name>
<sequence>MAQNPNLAALSAAGVSVWLDDLSRDRLQTGNLTELINTRSVVGVTTNPSIFQAALSKGTAYDAQVNELAARGADVDATIRTVTTDDVRNACDLLAKEYEASDGVDGRVSIEVDPRLAHDTDKTILQAIELWKIVDRPNLLIKIPATMAGLPAISAVIAEGISVNVTLIFSVERHRLVMDAYLEGLEKAKEAGHDLSKIHSVASFFVSRVDTEIDARLEKIGSDEALALRGKAGVANARLAYAAYEEVFGSDRFAKLKADGARVQRPLWASTGVKNPEYSDTLYVTELVAPNTVNTMPEKTLEAVADHGEITGNTIAGTAASSQETFDKLAAIGIDLPDVFRVLEDEGVEKFEKSWQELLDATQGQLDAAKK</sequence>
<dbReference type="EC" id="2.2.1.2"/>
<dbReference type="EMBL" id="CP000480">
    <property type="protein sequence ID" value="ABK72383.1"/>
    <property type="molecule type" value="Genomic_DNA"/>
</dbReference>
<dbReference type="EMBL" id="CP001663">
    <property type="protein sequence ID" value="AFP39488.1"/>
    <property type="molecule type" value="Genomic_DNA"/>
</dbReference>
<dbReference type="RefSeq" id="WP_011728814.1">
    <property type="nucleotide sequence ID" value="NZ_SIJM01000002.1"/>
</dbReference>
<dbReference type="RefSeq" id="YP_887417.1">
    <property type="nucleotide sequence ID" value="NC_008596.1"/>
</dbReference>
<dbReference type="SMR" id="A0QWX9"/>
<dbReference type="STRING" id="246196.MSMEG_3102"/>
<dbReference type="PaxDb" id="246196-MSMEI_3024"/>
<dbReference type="GeneID" id="93457877"/>
<dbReference type="KEGG" id="msb:LJ00_15430"/>
<dbReference type="KEGG" id="msg:MSMEI_3024"/>
<dbReference type="KEGG" id="msm:MSMEG_3102"/>
<dbReference type="PATRIC" id="fig|246196.19.peg.3063"/>
<dbReference type="eggNOG" id="COG0176">
    <property type="taxonomic scope" value="Bacteria"/>
</dbReference>
<dbReference type="OrthoDB" id="9809101at2"/>
<dbReference type="UniPathway" id="UPA00115">
    <property type="reaction ID" value="UER00414"/>
</dbReference>
<dbReference type="Proteomes" id="UP000000757">
    <property type="component" value="Chromosome"/>
</dbReference>
<dbReference type="Proteomes" id="UP000006158">
    <property type="component" value="Chromosome"/>
</dbReference>
<dbReference type="GO" id="GO:0005737">
    <property type="term" value="C:cytoplasm"/>
    <property type="evidence" value="ECO:0007669"/>
    <property type="project" value="UniProtKB-SubCell"/>
</dbReference>
<dbReference type="GO" id="GO:0004801">
    <property type="term" value="F:transaldolase activity"/>
    <property type="evidence" value="ECO:0007669"/>
    <property type="project" value="UniProtKB-UniRule"/>
</dbReference>
<dbReference type="GO" id="GO:0005975">
    <property type="term" value="P:carbohydrate metabolic process"/>
    <property type="evidence" value="ECO:0007669"/>
    <property type="project" value="InterPro"/>
</dbReference>
<dbReference type="GO" id="GO:0006098">
    <property type="term" value="P:pentose-phosphate shunt"/>
    <property type="evidence" value="ECO:0007669"/>
    <property type="project" value="UniProtKB-UniRule"/>
</dbReference>
<dbReference type="CDD" id="cd00955">
    <property type="entry name" value="Transaldolase_like"/>
    <property type="match status" value="1"/>
</dbReference>
<dbReference type="Gene3D" id="3.20.20.70">
    <property type="entry name" value="Aldolase class I"/>
    <property type="match status" value="1"/>
</dbReference>
<dbReference type="HAMAP" id="MF_00493">
    <property type="entry name" value="Transaldolase_2"/>
    <property type="match status" value="1"/>
</dbReference>
<dbReference type="InterPro" id="IPR013785">
    <property type="entry name" value="Aldolase_TIM"/>
</dbReference>
<dbReference type="InterPro" id="IPR001585">
    <property type="entry name" value="TAL/FSA"/>
</dbReference>
<dbReference type="InterPro" id="IPR004732">
    <property type="entry name" value="Transaldolase_2"/>
</dbReference>
<dbReference type="InterPro" id="IPR018225">
    <property type="entry name" value="Transaldolase_AS"/>
</dbReference>
<dbReference type="NCBIfam" id="NF002881">
    <property type="entry name" value="PRK03343.1"/>
    <property type="match status" value="1"/>
</dbReference>
<dbReference type="NCBIfam" id="TIGR00876">
    <property type="entry name" value="tal_mycobact"/>
    <property type="match status" value="1"/>
</dbReference>
<dbReference type="PANTHER" id="PTHR10683">
    <property type="entry name" value="TRANSALDOLASE"/>
    <property type="match status" value="1"/>
</dbReference>
<dbReference type="PANTHER" id="PTHR10683:SF31">
    <property type="entry name" value="TRANSALDOLASE"/>
    <property type="match status" value="1"/>
</dbReference>
<dbReference type="Pfam" id="PF00923">
    <property type="entry name" value="TAL_FSA"/>
    <property type="match status" value="1"/>
</dbReference>
<dbReference type="PIRSF" id="PIRSF036915">
    <property type="entry name" value="Trnald_Bac_Plnt"/>
    <property type="match status" value="1"/>
</dbReference>
<dbReference type="SUPFAM" id="SSF51569">
    <property type="entry name" value="Aldolase"/>
    <property type="match status" value="1"/>
</dbReference>
<dbReference type="PROSITE" id="PS01054">
    <property type="entry name" value="TRANSALDOLASE_1"/>
    <property type="match status" value="1"/>
</dbReference>
<dbReference type="PROSITE" id="PS00958">
    <property type="entry name" value="TRANSALDOLASE_2"/>
    <property type="match status" value="1"/>
</dbReference>
<keyword id="KW-0963">Cytoplasm</keyword>
<keyword id="KW-1017">Isopeptide bond</keyword>
<keyword id="KW-0570">Pentose shunt</keyword>
<keyword id="KW-1185">Reference proteome</keyword>
<keyword id="KW-0704">Schiff base</keyword>
<keyword id="KW-0808">Transferase</keyword>
<keyword id="KW-0832">Ubl conjugation</keyword>
<feature type="chain" id="PRO_0000396810" description="Transaldolase">
    <location>
        <begin position="1"/>
        <end position="371"/>
    </location>
</feature>
<feature type="active site" description="Schiff-base intermediate with substrate" evidence="1">
    <location>
        <position position="142"/>
    </location>
</feature>
<feature type="cross-link" description="Isoglutamyl lysine isopeptide (Lys-Gln) (interchain with Q-Cter in protein Pup)" evidence="2">
    <location>
        <position position="132"/>
    </location>
</feature>
<accession>A0QWX9</accession>
<accession>I7FL90</accession>
<reference key="1">
    <citation type="submission" date="2006-10" db="EMBL/GenBank/DDBJ databases">
        <authorList>
            <person name="Fleischmann R.D."/>
            <person name="Dodson R.J."/>
            <person name="Haft D.H."/>
            <person name="Merkel J.S."/>
            <person name="Nelson W.C."/>
            <person name="Fraser C.M."/>
        </authorList>
    </citation>
    <scope>NUCLEOTIDE SEQUENCE [LARGE SCALE GENOMIC DNA]</scope>
    <source>
        <strain>ATCC 700084 / mc(2)155</strain>
    </source>
</reference>
<reference key="2">
    <citation type="journal article" date="2007" name="Genome Biol.">
        <title>Interrupted coding sequences in Mycobacterium smegmatis: authentic mutations or sequencing errors?</title>
        <authorList>
            <person name="Deshayes C."/>
            <person name="Perrodou E."/>
            <person name="Gallien S."/>
            <person name="Euphrasie D."/>
            <person name="Schaeffer C."/>
            <person name="Van-Dorsselaer A."/>
            <person name="Poch O."/>
            <person name="Lecompte O."/>
            <person name="Reyrat J.-M."/>
        </authorList>
    </citation>
    <scope>NUCLEOTIDE SEQUENCE [LARGE SCALE GENOMIC DNA]</scope>
    <source>
        <strain>ATCC 700084 / mc(2)155</strain>
    </source>
</reference>
<reference key="3">
    <citation type="journal article" date="2009" name="Genome Res.">
        <title>Ortho-proteogenomics: multiple proteomes investigation through orthology and a new MS-based protocol.</title>
        <authorList>
            <person name="Gallien S."/>
            <person name="Perrodou E."/>
            <person name="Carapito C."/>
            <person name="Deshayes C."/>
            <person name="Reyrat J.-M."/>
            <person name="Van Dorsselaer A."/>
            <person name="Poch O."/>
            <person name="Schaeffer C."/>
            <person name="Lecompte O."/>
        </authorList>
    </citation>
    <scope>NUCLEOTIDE SEQUENCE [LARGE SCALE GENOMIC DNA]</scope>
    <source>
        <strain>ATCC 700084 / mc(2)155</strain>
    </source>
</reference>
<reference key="4">
    <citation type="journal article" date="2010" name="Mol. Biosyst.">
        <title>Expansion of the mycobacterial 'PUPylome'.</title>
        <authorList>
            <person name="Watrous J."/>
            <person name="Burns K."/>
            <person name="Liu W.T."/>
            <person name="Patel A."/>
            <person name="Hook V."/>
            <person name="Bafna V."/>
            <person name="Barry C.E. III"/>
            <person name="Bark S."/>
            <person name="Dorrestein P.C."/>
        </authorList>
    </citation>
    <scope>PUPYLATION AT LYS-132</scope>
    <scope>IDENTIFICATION BY MASS SPECTROMETRY</scope>
</reference>